<protein>
    <recommendedName>
        <fullName evidence="1">Small ribosomal subunit protein eS4</fullName>
    </recommendedName>
    <alternativeName>
        <fullName evidence="2">30S ribosomal protein S4e</fullName>
    </alternativeName>
</protein>
<dbReference type="EMBL" id="CP000254">
    <property type="protein sequence ID" value="ABD41946.1"/>
    <property type="molecule type" value="Genomic_DNA"/>
</dbReference>
<dbReference type="RefSeq" id="WP_011449204.1">
    <property type="nucleotide sequence ID" value="NC_007796.1"/>
</dbReference>
<dbReference type="SMR" id="Q2FT37"/>
<dbReference type="FunCoup" id="Q2FT37">
    <property type="interactions" value="144"/>
</dbReference>
<dbReference type="STRING" id="323259.Mhun_2241"/>
<dbReference type="EnsemblBacteria" id="ABD41946">
    <property type="protein sequence ID" value="ABD41946"/>
    <property type="gene ID" value="Mhun_2241"/>
</dbReference>
<dbReference type="GeneID" id="3923943"/>
<dbReference type="KEGG" id="mhu:Mhun_2241"/>
<dbReference type="eggNOG" id="arCOG04093">
    <property type="taxonomic scope" value="Archaea"/>
</dbReference>
<dbReference type="HOGENOM" id="CLU_060400_0_0_2"/>
<dbReference type="InParanoid" id="Q2FT37"/>
<dbReference type="OrthoDB" id="372073at2157"/>
<dbReference type="Proteomes" id="UP000001941">
    <property type="component" value="Chromosome"/>
</dbReference>
<dbReference type="GO" id="GO:0022627">
    <property type="term" value="C:cytosolic small ribosomal subunit"/>
    <property type="evidence" value="ECO:0007669"/>
    <property type="project" value="TreeGrafter"/>
</dbReference>
<dbReference type="GO" id="GO:0019843">
    <property type="term" value="F:rRNA binding"/>
    <property type="evidence" value="ECO:0007669"/>
    <property type="project" value="UniProtKB-KW"/>
</dbReference>
<dbReference type="GO" id="GO:0003735">
    <property type="term" value="F:structural constituent of ribosome"/>
    <property type="evidence" value="ECO:0007669"/>
    <property type="project" value="InterPro"/>
</dbReference>
<dbReference type="GO" id="GO:0006412">
    <property type="term" value="P:translation"/>
    <property type="evidence" value="ECO:0007669"/>
    <property type="project" value="UniProtKB-UniRule"/>
</dbReference>
<dbReference type="CDD" id="cd06087">
    <property type="entry name" value="KOW_RPS4"/>
    <property type="match status" value="1"/>
</dbReference>
<dbReference type="CDD" id="cd00165">
    <property type="entry name" value="S4"/>
    <property type="match status" value="1"/>
</dbReference>
<dbReference type="Gene3D" id="2.30.30.30">
    <property type="match status" value="1"/>
</dbReference>
<dbReference type="Gene3D" id="2.40.50.740">
    <property type="match status" value="1"/>
</dbReference>
<dbReference type="Gene3D" id="3.10.290.10">
    <property type="entry name" value="RNA-binding S4 domain"/>
    <property type="match status" value="1"/>
</dbReference>
<dbReference type="HAMAP" id="MF_00485">
    <property type="entry name" value="Ribosomal_eS4"/>
    <property type="match status" value="1"/>
</dbReference>
<dbReference type="InterPro" id="IPR005824">
    <property type="entry name" value="KOW"/>
</dbReference>
<dbReference type="InterPro" id="IPR014722">
    <property type="entry name" value="Rib_uL2_dom2"/>
</dbReference>
<dbReference type="InterPro" id="IPR000876">
    <property type="entry name" value="Ribosomal_eS4"/>
</dbReference>
<dbReference type="InterPro" id="IPR013845">
    <property type="entry name" value="Ribosomal_eS4_central_region"/>
</dbReference>
<dbReference type="InterPro" id="IPR038237">
    <property type="entry name" value="Ribosomal_eS4_central_sf"/>
</dbReference>
<dbReference type="InterPro" id="IPR041982">
    <property type="entry name" value="Ribosomal_eS4_KOW"/>
</dbReference>
<dbReference type="InterPro" id="IPR013843">
    <property type="entry name" value="Ribosomal_eS4_N"/>
</dbReference>
<dbReference type="InterPro" id="IPR036986">
    <property type="entry name" value="S4_RNA-bd_sf"/>
</dbReference>
<dbReference type="NCBIfam" id="NF003312">
    <property type="entry name" value="PRK04313.1"/>
    <property type="match status" value="1"/>
</dbReference>
<dbReference type="PANTHER" id="PTHR11581">
    <property type="entry name" value="30S/40S RIBOSOMAL PROTEIN S4"/>
    <property type="match status" value="1"/>
</dbReference>
<dbReference type="PANTHER" id="PTHR11581:SF0">
    <property type="entry name" value="SMALL RIBOSOMAL SUBUNIT PROTEIN ES4"/>
    <property type="match status" value="1"/>
</dbReference>
<dbReference type="Pfam" id="PF00900">
    <property type="entry name" value="Ribosomal_S4e"/>
    <property type="match status" value="1"/>
</dbReference>
<dbReference type="Pfam" id="PF08071">
    <property type="entry name" value="RS4NT"/>
    <property type="match status" value="1"/>
</dbReference>
<dbReference type="PIRSF" id="PIRSF002116">
    <property type="entry name" value="Ribosomal_S4"/>
    <property type="match status" value="1"/>
</dbReference>
<dbReference type="SMART" id="SM00739">
    <property type="entry name" value="KOW"/>
    <property type="match status" value="1"/>
</dbReference>
<dbReference type="PROSITE" id="PS50889">
    <property type="entry name" value="S4"/>
    <property type="match status" value="1"/>
</dbReference>
<comment type="similarity">
    <text evidence="1">Belongs to the eukaryotic ribosomal protein eS4 family.</text>
</comment>
<sequence length="241" mass="26945">MGHHLKRVVSPKSWGIPRKTDKFVTKTSPGPHNKNALPIVVWARDQMGIVRNMKEAKHVLREREIIVNGRPVRHPDMGIGIFDIVSIPKSGKHYRILRDKKGRHVTIPIDEDAASSRLVKITNKTIVKGGRIQLNLRDGSNVLTDKQYKSGDSIVLSLKEGQKNEIIDHFPFQPGNMAMIIGGKHSGVVGRIIEHIPVPGSLPNRVILKDESSGESFETIDEYVVMVGRESPAIDRWGIEE</sequence>
<accession>Q2FT37</accession>
<keyword id="KW-1185">Reference proteome</keyword>
<keyword id="KW-0687">Ribonucleoprotein</keyword>
<keyword id="KW-0689">Ribosomal protein</keyword>
<keyword id="KW-0694">RNA-binding</keyword>
<keyword id="KW-0699">rRNA-binding</keyword>
<feature type="chain" id="PRO_1000081338" description="Small ribosomal subunit protein eS4">
    <location>
        <begin position="1"/>
        <end position="241"/>
    </location>
</feature>
<feature type="domain" description="S4 RNA-binding" evidence="1">
    <location>
        <begin position="37"/>
        <end position="100"/>
    </location>
</feature>
<organism>
    <name type="scientific">Methanospirillum hungatei JF-1 (strain ATCC 27890 / DSM 864 / NBRC 100397 / JF-1)</name>
    <dbReference type="NCBI Taxonomy" id="323259"/>
    <lineage>
        <taxon>Archaea</taxon>
        <taxon>Methanobacteriati</taxon>
        <taxon>Methanobacteriota</taxon>
        <taxon>Stenosarchaea group</taxon>
        <taxon>Methanomicrobia</taxon>
        <taxon>Methanomicrobiales</taxon>
        <taxon>Methanospirillaceae</taxon>
        <taxon>Methanospirillum</taxon>
    </lineage>
</organism>
<gene>
    <name evidence="1" type="primary">rps4e</name>
    <name type="ordered locus">Mhun_2241</name>
</gene>
<reference key="1">
    <citation type="journal article" date="2016" name="Stand. Genomic Sci.">
        <title>Complete genome sequence of Methanospirillum hungatei type strain JF1.</title>
        <authorList>
            <person name="Gunsalus R.P."/>
            <person name="Cook L.E."/>
            <person name="Crable B."/>
            <person name="Rohlin L."/>
            <person name="McDonald E."/>
            <person name="Mouttaki H."/>
            <person name="Sieber J.R."/>
            <person name="Poweleit N."/>
            <person name="Zhou H."/>
            <person name="Lapidus A.L."/>
            <person name="Daligault H.E."/>
            <person name="Land M."/>
            <person name="Gilna P."/>
            <person name="Ivanova N."/>
            <person name="Kyrpides N."/>
            <person name="Culley D.E."/>
            <person name="McInerney M.J."/>
        </authorList>
    </citation>
    <scope>NUCLEOTIDE SEQUENCE [LARGE SCALE GENOMIC DNA]</scope>
    <source>
        <strain>ATCC 27890 / DSM 864 / NBRC 100397 / JF-1</strain>
    </source>
</reference>
<evidence type="ECO:0000255" key="1">
    <source>
        <dbReference type="HAMAP-Rule" id="MF_00485"/>
    </source>
</evidence>
<evidence type="ECO:0000305" key="2"/>
<name>RS4E_METHJ</name>
<proteinExistence type="inferred from homology"/>